<keyword id="KW-0968">Cytoplasmic vesicle</keyword>
<keyword id="KW-0225">Disease variant</keyword>
<keyword id="KW-0341">Growth regulation</keyword>
<keyword id="KW-0539">Nucleus</keyword>
<keyword id="KW-1267">Proteomics identification</keyword>
<keyword id="KW-1185">Reference proteome</keyword>
<keyword id="KW-0727">SH2 domain</keyword>
<keyword id="KW-0734">Signal transduction inhibitor</keyword>
<keyword id="KW-0833">Ubl conjugation pathway</keyword>
<sequence>MVAHNQVAADNAVSTAAEPRRRPEPSSSSSSSPAAPARPRPCPAVPAPAPGDTHFRTFRSHADYRRITRASALLDACGFYWGPLSVHGAHERLRAEPVGTFLVRDSRQRNCFFALSVKMASGPTSIRVHFQAGRFHLDGSRESFDCLFELLEHYVAAPRRMLGAPLRQRRVRPLQELCRQRIVATVGRENLARIPLNPVLRDYLSSFPFQI</sequence>
<evidence type="ECO:0000250" key="1"/>
<evidence type="ECO:0000250" key="2">
    <source>
        <dbReference type="UniProtKB" id="O35716"/>
    </source>
</evidence>
<evidence type="ECO:0000255" key="3">
    <source>
        <dbReference type="PROSITE-ProRule" id="PRU00191"/>
    </source>
</evidence>
<evidence type="ECO:0000255" key="4">
    <source>
        <dbReference type="PROSITE-ProRule" id="PRU00194"/>
    </source>
</evidence>
<evidence type="ECO:0000256" key="5">
    <source>
        <dbReference type="SAM" id="MobiDB-lite"/>
    </source>
</evidence>
<evidence type="ECO:0000269" key="6">
    <source>
    </source>
</evidence>
<evidence type="ECO:0000269" key="7">
    <source>
    </source>
</evidence>
<evidence type="ECO:0000269" key="8">
    <source>
    </source>
</evidence>
<evidence type="ECO:0000269" key="9">
    <source>
    </source>
</evidence>
<evidence type="ECO:0000269" key="10">
    <source>
    </source>
</evidence>
<evidence type="ECO:0000269" key="11">
    <source>
    </source>
</evidence>
<evidence type="ECO:0000269" key="12">
    <source>
    </source>
</evidence>
<evidence type="ECO:0000269" key="13">
    <source>
    </source>
</evidence>
<evidence type="ECO:0000269" key="14">
    <source>
    </source>
</evidence>
<evidence type="ECO:0000303" key="15">
    <source>
    </source>
</evidence>
<evidence type="ECO:0000305" key="16"/>
<gene>
    <name type="primary">SOCS1</name>
    <name type="synonym">SSI1</name>
    <name evidence="15" type="synonym">TIP3</name>
</gene>
<name>SOCS1_HUMAN</name>
<reference key="1">
    <citation type="journal article" date="1997" name="Biochem. Biophys. Res. Commun.">
        <title>Cloning and functional analysis of new members of STAT induced STAT inhibitor (SSI) family: SSI-2 and SSI-3.</title>
        <authorList>
            <person name="Minamoto S."/>
            <person name="Ikegame K."/>
            <person name="Ueno K."/>
            <person name="Narazaki M."/>
            <person name="Naka T."/>
            <person name="Yamamoto H."/>
            <person name="Matsumoto T."/>
            <person name="Saito H."/>
            <person name="Hosoe S."/>
            <person name="Kishimoto T."/>
        </authorList>
    </citation>
    <scope>NUCLEOTIDE SEQUENCE [MRNA]</scope>
    <source>
        <tissue>T-cell lymphoma</tissue>
    </source>
</reference>
<reference key="2">
    <citation type="journal article" date="1997" name="J. Biol. Chem.">
        <title>SOCS-1/JAB/SSI-1 can bind to and suppress Tec protein-tyrosine kinase.</title>
        <authorList>
            <person name="Ohya K."/>
            <person name="Kajigaya S."/>
            <person name="Yamashita Y."/>
            <person name="Miyazato A."/>
            <person name="Hatake K."/>
            <person name="Miura Y."/>
            <person name="Ikeda U."/>
            <person name="Shimada K."/>
            <person name="Ozawa K."/>
            <person name="Mano H."/>
        </authorList>
    </citation>
    <scope>NUCLEOTIDE SEQUENCE [MRNA]</scope>
    <scope>FUNCTION</scope>
    <source>
        <tissue>Myeloid leukemia cell</tissue>
    </source>
</reference>
<reference key="3">
    <citation type="journal article" date="1997" name="Nature">
        <title>A family of cytokine-inducible inhibitors of signaling.</title>
        <authorList>
            <person name="Starr R."/>
            <person name="Willson T.A."/>
            <person name="Viney E.M."/>
            <person name="Murray L.J.L."/>
            <person name="Rayner J.R."/>
            <person name="Jenkins B.J."/>
            <person name="Gonda T.J."/>
            <person name="Alexander W.S."/>
            <person name="Metcalf D."/>
            <person name="Nicola N.A."/>
            <person name="Hilton D.J."/>
        </authorList>
    </citation>
    <scope>NUCLEOTIDE SEQUENCE [MRNA]</scope>
</reference>
<reference key="4">
    <citation type="journal article" date="1999" name="Genomics">
        <title>Radiation hybrid and cytogenetic mapping of SOCS1 and SOCS2 to chromosomes 16p13 and 12q, respectively.</title>
        <authorList>
            <person name="Yandava C.N."/>
            <person name="Pillari A."/>
            <person name="Drazen J.M."/>
        </authorList>
    </citation>
    <scope>NUCLEOTIDE SEQUENCE [GENOMIC DNA]</scope>
</reference>
<reference key="5">
    <citation type="submission" date="1999-11" db="EMBL/GenBank/DDBJ databases">
        <authorList>
            <person name="Schlueter G."/>
        </authorList>
    </citation>
    <scope>NUCLEOTIDE SEQUENCE [GENOMIC DNA]</scope>
</reference>
<reference key="6">
    <citation type="journal article" date="1997" name="Nature">
        <title>A new protein containing an SH2 domain that inhibits JAK kinases.</title>
        <authorList>
            <person name="Endo T.A."/>
            <person name="Masuhara M."/>
            <person name="Yokouchi M."/>
            <person name="Suzuki R."/>
            <person name="Sakamoto H."/>
            <person name="Mitsui K."/>
            <person name="Matsumoto A."/>
            <person name="Tanimura S."/>
            <person name="Ohtsubo M."/>
            <person name="Misawa H."/>
            <person name="Miyazaki T."/>
            <person name="Leonor N."/>
            <person name="Taniguchi T."/>
            <person name="Fujita T."/>
            <person name="Kanakura Y."/>
            <person name="Komiya S."/>
            <person name="Yoshimura A."/>
        </authorList>
    </citation>
    <scope>NUCLEOTIDE SEQUENCE [MRNA] OF 15-211</scope>
    <source>
        <tissue>B-cell</tissue>
    </source>
</reference>
<reference key="7">
    <citation type="journal article" date="1998" name="J. Biol. Chem.">
        <title>Interaction of human suppressor of cytokine signaling (SOCS)-2 with the insulin-like growth factor-I receptor.</title>
        <authorList>
            <person name="Dey B.R."/>
            <person name="Spence S.L."/>
            <person name="Nissley P."/>
            <person name="Furlanetto R.W."/>
        </authorList>
    </citation>
    <scope>INTERACTION WITH IGF1R</scope>
</reference>
<reference key="8">
    <citation type="journal article" date="2001" name="J. Biol. Chem.">
        <title>The SOCS box of SOCS-1 accelerates ubiquitin-dependent proteolysis of TEL-JAK2.</title>
        <authorList>
            <person name="Kamizono S."/>
            <person name="Hanada T."/>
            <person name="Yasukawa H."/>
            <person name="Minoguchi S."/>
            <person name="Kato R."/>
            <person name="Minoguchi M."/>
            <person name="Hattori K."/>
            <person name="Hatakeyama S."/>
            <person name="Yada M."/>
            <person name="Morita S."/>
            <person name="Kitamura T."/>
            <person name="Kato H."/>
            <person name="Nakayama K.I."/>
            <person name="Yoshimura A."/>
        </authorList>
    </citation>
    <scope>FUNCTION AS AN E3 UBIQUITIN-PROTEIN LIGASE</scope>
    <scope>INTERACTION WITH CUL2</scope>
</reference>
<reference key="9">
    <citation type="journal article" date="2001" name="Mol. Cell. Biol.">
        <title>Socs-1 inhibits TEL-JAK2-mediated transformation of hematopoietic cells through inhibition of JAK2 kinase activity and induction of proteasome-mediated degradation.</title>
        <authorList>
            <person name="Frantsve J."/>
            <person name="Schwaller J."/>
            <person name="Sternberg D.W."/>
            <person name="Kutok J."/>
            <person name="Gilliland D.G."/>
        </authorList>
    </citation>
    <scope>FUNCTION AS AN E3 UBIQUITIN-PROTEIN LIGASE</scope>
</reference>
<reference key="10">
    <citation type="journal article" date="2001" name="Stem Cells">
        <title>SOCS proteins: negative regulators of cytokine signaling.</title>
        <authorList>
            <person name="Krebs D.L."/>
            <person name="Hilton D.J."/>
        </authorList>
    </citation>
    <scope>REVIEW</scope>
</reference>
<reference key="11">
    <citation type="journal article" date="2002" name="Biochem. Biophys. Res. Commun.">
        <title>Interaction of Axl receptor tyrosine kinase with C1-TEN, a novel C1 domain-containing protein with homology to tensin.</title>
        <authorList>
            <person name="Hafizi S."/>
            <person name="Alindri F."/>
            <person name="Karlsson R."/>
            <person name="Dahlbaeck B."/>
        </authorList>
    </citation>
    <scope>INTERACTION WITH AXL</scope>
</reference>
<reference key="12">
    <citation type="journal article" date="2002" name="J. Neurosci. Res.">
        <title>Cytokine signaling in the brain: putting a SOCS in it?</title>
        <authorList>
            <person name="Wang J."/>
            <person name="Campbell I.L."/>
        </authorList>
    </citation>
    <scope>REVIEW</scope>
</reference>
<reference key="13">
    <citation type="journal article" date="2006" name="J. Cell Sci.">
        <title>Suppressors of cytokine signaling (SOCS) 1 and SOCS3 interact with and modulate fibroblast growth factor receptor signaling.</title>
        <authorList>
            <person name="Ben-Zvi T."/>
            <person name="Yayon A."/>
            <person name="Gertler A."/>
            <person name="Monsonego-Ornan E."/>
        </authorList>
    </citation>
    <scope>INTERACTION WITH FGFR3</scope>
    <scope>SUBCELLULAR LOCATION</scope>
</reference>
<reference key="14">
    <citation type="journal article" date="2002" name="J. Biol. Chem.">
        <title>TRIM8/GERP RING finger protein interacts with SOCS-1.</title>
        <authorList>
            <person name="Toniato E."/>
            <person name="Chen X.P."/>
            <person name="Losman J."/>
            <person name="Flati V."/>
            <person name="Donahue L."/>
            <person name="Rothman P."/>
        </authorList>
    </citation>
    <scope>INTERACTION WITH TRIM8</scope>
</reference>
<reference key="15">
    <citation type="journal article" date="2013" name="Mol. Cell. Biol.">
        <title>DCNL1 functions as a substrate sensor and activator of cullin 2-RING ligase.</title>
        <authorList>
            <person name="Heir P."/>
            <person name="Sufan R.I."/>
            <person name="Greer S.N."/>
            <person name="Poon B.P."/>
            <person name="Lee J.E."/>
            <person name="Ohh M."/>
        </authorList>
    </citation>
    <scope>INTERACTION WITH DCUN1D1</scope>
</reference>
<reference key="16">
    <citation type="journal article" date="2020" name="J. Allergy Clin. Immunol.">
        <title>Immune dysregulation and multisystem inflammatory syndrome in children (MIS-C) in individuals with haploinsufficiency of SOCS1.</title>
        <authorList>
            <person name="Lee P.Y."/>
            <person name="Platt C.D."/>
            <person name="Weeks S."/>
            <person name="Grace R.F."/>
            <person name="Maher G."/>
            <person name="Gauthier K."/>
            <person name="Devana S."/>
            <person name="Vitali S."/>
            <person name="Randolph A.G."/>
            <person name="McDonald D.R."/>
            <person name="Geha R.S."/>
            <person name="Chou J."/>
        </authorList>
    </citation>
    <scope>INVOLVEMENT IN AISIMD</scope>
</reference>
<reference key="17">
    <citation type="journal article" date="2020" name="Nature">
        <title>Whole-genome sequencing of a sporadic primary immunodeficiency cohort.</title>
        <authorList>
            <consortium name="Primary Immunodeficiency Consortium for the NIHR Bioresource"/>
            <person name="Thaventhiran J.E.D."/>
            <person name="Lango Allen H."/>
            <person name="Burren O.S."/>
            <person name="Rae W."/>
            <person name="Greene D."/>
            <person name="Staples E."/>
            <person name="Zhang Z."/>
            <person name="Farmery J.H.R."/>
            <person name="Simeoni I."/>
            <person name="Rivers E."/>
            <person name="Maimaris J."/>
            <person name="Penkett C.J."/>
            <person name="Stephens J."/>
            <person name="Deevi S.V.V."/>
            <person name="Sanchis-Juan A."/>
            <person name="Gleadall N.S."/>
            <person name="Thomas M.J."/>
            <person name="Sargur R.B."/>
            <person name="Gordins P."/>
            <person name="Baxendale H.E."/>
            <person name="Brown M."/>
            <person name="Tuijnenburg P."/>
            <person name="Worth A."/>
            <person name="Hanson S."/>
            <person name="Linger R.J."/>
            <person name="Buckland M.S."/>
            <person name="Rayner-Matthews P.J."/>
            <person name="Gilmour K.C."/>
            <person name="Samarghitean C."/>
            <person name="Seneviratne S.L."/>
            <person name="Sansom D.M."/>
            <person name="Lynch A.G."/>
            <person name="Megy K."/>
            <person name="Ellinghaus E."/>
            <person name="Ellinghaus D."/>
            <person name="Jorgensen S.F."/>
            <person name="Karlsen T.H."/>
            <person name="Stirrups K.E."/>
            <person name="Cutler A.J."/>
            <person name="Kumararatne D.S."/>
            <person name="Chandra A."/>
            <person name="Edgar J.D.M."/>
            <person name="Herwadkar A."/>
            <person name="Cooper N."/>
            <person name="Grigoriadou S."/>
            <person name="Huissoon A.P."/>
            <person name="Goddard S."/>
            <person name="Jolles S."/>
            <person name="Schuetz C."/>
            <person name="Boschann F."/>
            <person name="Lyons P.A."/>
            <person name="Hurles M.E."/>
            <person name="Savic S."/>
            <person name="Burns S.O."/>
            <person name="Kuijpers T.W."/>
            <person name="Turro E."/>
            <person name="Ouwehand W.H."/>
            <person name="Thrasher A.J."/>
            <person name="Smith K.G.C."/>
        </authorList>
    </citation>
    <scope>INVOLVEMENT IN AISIMD</scope>
    <scope>VARIANT AISIMD 64-TYR--ILE-211 DEL</scope>
    <scope>FUNCTION</scope>
    <scope>CHARACTERIZATION OF VARIANT AISIMD 64-TYR--ILE-211 DEL</scope>
</reference>
<reference key="18">
    <citation type="journal article" date="2020" name="Nat. Commun.">
        <title>Early-onset autoimmunity associated with SOCS1 haploinsufficiency.</title>
        <authorList>
            <person name="Hadjadj J."/>
            <person name="Castro C.N."/>
            <person name="Tusseau M."/>
            <person name="Stolzenberg M.C."/>
            <person name="Mazerolles F."/>
            <person name="Aladjidi N."/>
            <person name="Armstrong M."/>
            <person name="Ashrafian H."/>
            <person name="Cutcutache I."/>
            <person name="Ebetsberger-Dachs G."/>
            <person name="Elliott K.S."/>
            <person name="Durieu I."/>
            <person name="Fabien N."/>
            <person name="Fusaro M."/>
            <person name="Heeg M."/>
            <person name="Schmitt Y."/>
            <person name="Bras M."/>
            <person name="Knight J.C."/>
            <person name="Lega J.C."/>
            <person name="Lesca G."/>
            <person name="Mathieu A.L."/>
            <person name="Moreews M."/>
            <person name="Moreira B."/>
            <person name="Nosbaum A."/>
            <person name="Page M."/>
            <person name="Picard C."/>
            <person name="Ronan Leahy T."/>
            <person name="Rouvet I."/>
            <person name="Ryan E."/>
            <person name="Sanlaville D."/>
            <person name="Schwarz K."/>
            <person name="Skelton A."/>
            <person name="Viallard J.F."/>
            <person name="Viel S."/>
            <person name="Villard M."/>
            <person name="Callebaut I."/>
            <person name="Picard C."/>
            <person name="Walzer T."/>
            <person name="Ehl S."/>
            <person name="Fischer A."/>
            <person name="Neven B."/>
            <person name="Belot A."/>
            <person name="Rieux-Laucat F."/>
        </authorList>
    </citation>
    <scope>INVOLVEMENT IN AISIMD</scope>
    <scope>VARIANTS AISIMD TRP-22; ARG-123 AND HIS-154</scope>
    <scope>CHARACTERIZATION OF VARIANTS AISIMD TRP-22; ARG-123 AND HIS-154</scope>
    <scope>FUNCTION</scope>
</reference>
<dbReference type="EMBL" id="AB005043">
    <property type="protein sequence ID" value="BAA22431.1"/>
    <property type="molecule type" value="mRNA"/>
</dbReference>
<dbReference type="EMBL" id="AB000734">
    <property type="protein sequence ID" value="BAA23521.1"/>
    <property type="molecule type" value="mRNA"/>
</dbReference>
<dbReference type="EMBL" id="U88326">
    <property type="protein sequence ID" value="AAB62401.1"/>
    <property type="molecule type" value="mRNA"/>
</dbReference>
<dbReference type="EMBL" id="AF132440">
    <property type="protein sequence ID" value="AAD27709.1"/>
    <property type="molecule type" value="Genomic_DNA"/>
</dbReference>
<dbReference type="EMBL" id="Z46940">
    <property type="protein sequence ID" value="CAB92528.1"/>
    <property type="molecule type" value="Genomic_DNA"/>
</dbReference>
<dbReference type="EMBL" id="AB000676">
    <property type="protein sequence ID" value="BAA21537.1"/>
    <property type="molecule type" value="mRNA"/>
</dbReference>
<dbReference type="CCDS" id="CCDS10546.1"/>
<dbReference type="RefSeq" id="NP_003736.1">
    <property type="nucleotide sequence ID" value="NM_003745.2"/>
</dbReference>
<dbReference type="SMR" id="O15524"/>
<dbReference type="BioGRID" id="114203">
    <property type="interactions" value="190"/>
</dbReference>
<dbReference type="DIP" id="DIP-29662N"/>
<dbReference type="FunCoup" id="O15524">
    <property type="interactions" value="1477"/>
</dbReference>
<dbReference type="IntAct" id="O15524">
    <property type="interactions" value="70"/>
</dbReference>
<dbReference type="MINT" id="O15524"/>
<dbReference type="STRING" id="9606.ENSP00000496577"/>
<dbReference type="iPTMnet" id="O15524"/>
<dbReference type="PhosphoSitePlus" id="O15524"/>
<dbReference type="BioMuta" id="SOCS1"/>
<dbReference type="MassIVE" id="O15524"/>
<dbReference type="PaxDb" id="9606-ENSP00000329418"/>
<dbReference type="PeptideAtlas" id="O15524"/>
<dbReference type="ProteomicsDB" id="48724"/>
<dbReference type="Antibodypedia" id="4157">
    <property type="antibodies" value="623 antibodies from 44 providers"/>
</dbReference>
<dbReference type="DNASU" id="8651"/>
<dbReference type="Ensembl" id="ENST00000332029.4">
    <property type="protein sequence ID" value="ENSP00000329418.2"/>
    <property type="gene ID" value="ENSG00000185338.7"/>
</dbReference>
<dbReference type="Ensembl" id="ENST00000644787.1">
    <property type="protein sequence ID" value="ENSP00000496577.1"/>
    <property type="gene ID" value="ENSG00000185338.7"/>
</dbReference>
<dbReference type="GeneID" id="8651"/>
<dbReference type="KEGG" id="hsa:8651"/>
<dbReference type="MANE-Select" id="ENST00000332029.4">
    <property type="protein sequence ID" value="ENSP00000329418.2"/>
    <property type="RefSeq nucleotide sequence ID" value="NM_003745.2"/>
    <property type="RefSeq protein sequence ID" value="NP_003736.1"/>
</dbReference>
<dbReference type="AGR" id="HGNC:19383"/>
<dbReference type="CTD" id="8651"/>
<dbReference type="DisGeNET" id="8651"/>
<dbReference type="GeneCards" id="SOCS1"/>
<dbReference type="HGNC" id="HGNC:19383">
    <property type="gene designation" value="SOCS1"/>
</dbReference>
<dbReference type="HPA" id="ENSG00000185338">
    <property type="expression patterns" value="Low tissue specificity"/>
</dbReference>
<dbReference type="MalaCards" id="SOCS1"/>
<dbReference type="MIM" id="603597">
    <property type="type" value="gene"/>
</dbReference>
<dbReference type="MIM" id="619375">
    <property type="type" value="phenotype"/>
</dbReference>
<dbReference type="neXtProt" id="NX_O15524"/>
<dbReference type="OpenTargets" id="ENSG00000185338"/>
<dbReference type="Orphanet" id="619948">
    <property type="disease" value="Early-onset autoimmunity-autoinflammation-immunodeficiency syndrome due to SOCS1 haploinsufficiency"/>
</dbReference>
<dbReference type="PharmGKB" id="PA134863068"/>
<dbReference type="VEuPathDB" id="HostDB:ENSG00000185338"/>
<dbReference type="eggNOG" id="KOG4566">
    <property type="taxonomic scope" value="Eukaryota"/>
</dbReference>
<dbReference type="GeneTree" id="ENSGT00940000161164"/>
<dbReference type="HOGENOM" id="CLU_079452_2_1_1"/>
<dbReference type="InParanoid" id="O15524"/>
<dbReference type="OMA" id="FPTFTCK"/>
<dbReference type="OrthoDB" id="9937362at2759"/>
<dbReference type="PAN-GO" id="O15524">
    <property type="GO annotations" value="3 GO annotations based on evolutionary models"/>
</dbReference>
<dbReference type="PhylomeDB" id="O15524"/>
<dbReference type="TreeFam" id="TF321368"/>
<dbReference type="PathwayCommons" id="O15524"/>
<dbReference type="Reactome" id="R-HSA-1266695">
    <property type="pathway name" value="Interleukin-7 signaling"/>
</dbReference>
<dbReference type="Reactome" id="R-HSA-1433559">
    <property type="pathway name" value="Regulation of KIT signaling"/>
</dbReference>
<dbReference type="Reactome" id="R-HSA-166058">
    <property type="pathway name" value="MyD88:MAL(TIRAP) cascade initiated on plasma membrane"/>
</dbReference>
<dbReference type="Reactome" id="R-HSA-6785807">
    <property type="pathway name" value="Interleukin-4 and Interleukin-13 signaling"/>
</dbReference>
<dbReference type="Reactome" id="R-HSA-877300">
    <property type="pathway name" value="Interferon gamma signaling"/>
</dbReference>
<dbReference type="Reactome" id="R-HSA-877312">
    <property type="pathway name" value="Regulation of IFNG signaling"/>
</dbReference>
<dbReference type="Reactome" id="R-HSA-909733">
    <property type="pathway name" value="Interferon alpha/beta signaling"/>
</dbReference>
<dbReference type="Reactome" id="R-HSA-912694">
    <property type="pathway name" value="Regulation of IFNA/IFNB signaling"/>
</dbReference>
<dbReference type="Reactome" id="R-HSA-9674555">
    <property type="pathway name" value="Signaling by CSF3 (G-CSF)"/>
</dbReference>
<dbReference type="Reactome" id="R-HSA-9705462">
    <property type="pathway name" value="Inactivation of CSF3 (G-CSF) signaling"/>
</dbReference>
<dbReference type="Reactome" id="R-HSA-982772">
    <property type="pathway name" value="Growth hormone receptor signaling"/>
</dbReference>
<dbReference type="Reactome" id="R-HSA-983168">
    <property type="pathway name" value="Antigen processing: Ubiquitination &amp; Proteasome degradation"/>
</dbReference>
<dbReference type="SignaLink" id="O15524"/>
<dbReference type="SIGNOR" id="O15524"/>
<dbReference type="UniPathway" id="UPA00143"/>
<dbReference type="BioGRID-ORCS" id="8651">
    <property type="hits" value="17 hits in 1214 CRISPR screens"/>
</dbReference>
<dbReference type="CD-CODE" id="8C2F96ED">
    <property type="entry name" value="Centrosome"/>
</dbReference>
<dbReference type="ChiTaRS" id="SOCS1">
    <property type="organism name" value="human"/>
</dbReference>
<dbReference type="GeneWiki" id="Suppressor_of_cytokine_signaling_1"/>
<dbReference type="GenomeRNAi" id="8651"/>
<dbReference type="Pharos" id="O15524">
    <property type="development level" value="Tbio"/>
</dbReference>
<dbReference type="PRO" id="PR:O15524"/>
<dbReference type="Proteomes" id="UP000005640">
    <property type="component" value="Chromosome 16"/>
</dbReference>
<dbReference type="RNAct" id="O15524">
    <property type="molecule type" value="protein"/>
</dbReference>
<dbReference type="Bgee" id="ENSG00000185338">
    <property type="expression patterns" value="Expressed in type B pancreatic cell and 136 other cell types or tissues"/>
</dbReference>
<dbReference type="ExpressionAtlas" id="O15524">
    <property type="expression patterns" value="baseline and differential"/>
</dbReference>
<dbReference type="GO" id="GO:0005737">
    <property type="term" value="C:cytoplasm"/>
    <property type="evidence" value="ECO:0000304"/>
    <property type="project" value="ProtInc"/>
</dbReference>
<dbReference type="GO" id="GO:0031410">
    <property type="term" value="C:cytoplasmic vesicle"/>
    <property type="evidence" value="ECO:0007669"/>
    <property type="project" value="UniProtKB-KW"/>
</dbReference>
<dbReference type="GO" id="GO:0005829">
    <property type="term" value="C:cytosol"/>
    <property type="evidence" value="ECO:0000304"/>
    <property type="project" value="Reactome"/>
</dbReference>
<dbReference type="GO" id="GO:0043231">
    <property type="term" value="C:intracellular membrane-bounded organelle"/>
    <property type="evidence" value="ECO:0000314"/>
    <property type="project" value="HPA"/>
</dbReference>
<dbReference type="GO" id="GO:0005654">
    <property type="term" value="C:nucleoplasm"/>
    <property type="evidence" value="ECO:0000314"/>
    <property type="project" value="HPA"/>
</dbReference>
<dbReference type="GO" id="GO:0005126">
    <property type="term" value="F:cytokine receptor binding"/>
    <property type="evidence" value="ECO:0000318"/>
    <property type="project" value="GO_Central"/>
</dbReference>
<dbReference type="GO" id="GO:0005159">
    <property type="term" value="F:insulin-like growth factor receptor binding"/>
    <property type="evidence" value="ECO:0000353"/>
    <property type="project" value="UniProtKB"/>
</dbReference>
<dbReference type="GO" id="GO:0019210">
    <property type="term" value="F:kinase inhibitor activity"/>
    <property type="evidence" value="ECO:0000250"/>
    <property type="project" value="UniProtKB"/>
</dbReference>
<dbReference type="GO" id="GO:0019901">
    <property type="term" value="F:protein kinase binding"/>
    <property type="evidence" value="ECO:0000353"/>
    <property type="project" value="UniProtKB"/>
</dbReference>
<dbReference type="GO" id="GO:0004860">
    <property type="term" value="F:protein kinase inhibitor activity"/>
    <property type="evidence" value="ECO:0000304"/>
    <property type="project" value="ProtInc"/>
</dbReference>
<dbReference type="GO" id="GO:0007259">
    <property type="term" value="P:cell surface receptor signaling pathway via JAK-STAT"/>
    <property type="evidence" value="ECO:0007669"/>
    <property type="project" value="Ensembl"/>
</dbReference>
<dbReference type="GO" id="GO:0071230">
    <property type="term" value="P:cellular response to amino acid stimulus"/>
    <property type="evidence" value="ECO:0007669"/>
    <property type="project" value="Ensembl"/>
</dbReference>
<dbReference type="GO" id="GO:0019221">
    <property type="term" value="P:cytokine-mediated signaling pathway"/>
    <property type="evidence" value="ECO:0000250"/>
    <property type="project" value="UniProtKB"/>
</dbReference>
<dbReference type="GO" id="GO:0045444">
    <property type="term" value="P:fat cell differentiation"/>
    <property type="evidence" value="ECO:0007669"/>
    <property type="project" value="Ensembl"/>
</dbReference>
<dbReference type="GO" id="GO:0035556">
    <property type="term" value="P:intracellular signal transduction"/>
    <property type="evidence" value="ECO:0007669"/>
    <property type="project" value="InterPro"/>
</dbReference>
<dbReference type="GO" id="GO:0030225">
    <property type="term" value="P:macrophage differentiation"/>
    <property type="evidence" value="ECO:0000315"/>
    <property type="project" value="BHF-UCL"/>
</dbReference>
<dbReference type="GO" id="GO:0043377">
    <property type="term" value="P:negative regulation of CD8-positive, alpha-beta T cell differentiation"/>
    <property type="evidence" value="ECO:0000250"/>
    <property type="project" value="UniProtKB"/>
</dbReference>
<dbReference type="GO" id="GO:0046627">
    <property type="term" value="P:negative regulation of insulin receptor signaling pathway"/>
    <property type="evidence" value="ECO:0000250"/>
    <property type="project" value="UniProtKB"/>
</dbReference>
<dbReference type="GO" id="GO:0046426">
    <property type="term" value="P:negative regulation of receptor signaling pathway via JAK-STAT"/>
    <property type="evidence" value="ECO:0000315"/>
    <property type="project" value="BHF-UCL"/>
</dbReference>
<dbReference type="GO" id="GO:0043372">
    <property type="term" value="P:positive regulation of CD4-positive, alpha-beta T cell differentiation"/>
    <property type="evidence" value="ECO:0000250"/>
    <property type="project" value="UniProtKB"/>
</dbReference>
<dbReference type="GO" id="GO:0045591">
    <property type="term" value="P:positive regulation of regulatory T cell differentiation"/>
    <property type="evidence" value="ECO:0000315"/>
    <property type="project" value="BHF-UCL"/>
</dbReference>
<dbReference type="GO" id="GO:0016567">
    <property type="term" value="P:protein ubiquitination"/>
    <property type="evidence" value="ECO:0007669"/>
    <property type="project" value="UniProtKB-UniPathway"/>
</dbReference>
<dbReference type="GO" id="GO:0001817">
    <property type="term" value="P:regulation of cytokine production"/>
    <property type="evidence" value="ECO:0007669"/>
    <property type="project" value="Ensembl"/>
</dbReference>
<dbReference type="CDD" id="cd10382">
    <property type="entry name" value="SH2_SOCS1"/>
    <property type="match status" value="1"/>
</dbReference>
<dbReference type="CDD" id="cd03735">
    <property type="entry name" value="SOCS_SOCS1"/>
    <property type="match status" value="1"/>
</dbReference>
<dbReference type="FunFam" id="1.10.750.20:FF:000005">
    <property type="entry name" value="Suppressor of cytokine signaling 1"/>
    <property type="match status" value="1"/>
</dbReference>
<dbReference type="FunFam" id="3.30.505.10:FF:000054">
    <property type="entry name" value="Suppressor of cytokine signaling 1"/>
    <property type="match status" value="1"/>
</dbReference>
<dbReference type="Gene3D" id="3.30.505.10">
    <property type="entry name" value="SH2 domain"/>
    <property type="match status" value="1"/>
</dbReference>
<dbReference type="Gene3D" id="1.10.750.20">
    <property type="entry name" value="SOCS box"/>
    <property type="match status" value="1"/>
</dbReference>
<dbReference type="InterPro" id="IPR000980">
    <property type="entry name" value="SH2"/>
</dbReference>
<dbReference type="InterPro" id="IPR036860">
    <property type="entry name" value="SH2_dom_sf"/>
</dbReference>
<dbReference type="InterPro" id="IPR035861">
    <property type="entry name" value="SOCS1_SH2"/>
</dbReference>
<dbReference type="InterPro" id="IPR001496">
    <property type="entry name" value="SOCS_box"/>
</dbReference>
<dbReference type="InterPro" id="IPR036036">
    <property type="entry name" value="SOCS_box-like_dom_sf"/>
</dbReference>
<dbReference type="PANTHER" id="PTHR10155">
    <property type="entry name" value="PHOSPHATIDYLINOSITOL 3-KINASE REGULATORY SUBUNIT"/>
    <property type="match status" value="1"/>
</dbReference>
<dbReference type="PANTHER" id="PTHR10155:SF4">
    <property type="entry name" value="SUPPRESSOR OF CYTOKINE SIGNALING 1"/>
    <property type="match status" value="1"/>
</dbReference>
<dbReference type="Pfam" id="PF00017">
    <property type="entry name" value="SH2"/>
    <property type="match status" value="1"/>
</dbReference>
<dbReference type="Pfam" id="PF07525">
    <property type="entry name" value="SOCS_box"/>
    <property type="match status" value="1"/>
</dbReference>
<dbReference type="SMART" id="SM00252">
    <property type="entry name" value="SH2"/>
    <property type="match status" value="1"/>
</dbReference>
<dbReference type="SMART" id="SM00253">
    <property type="entry name" value="SOCS"/>
    <property type="match status" value="1"/>
</dbReference>
<dbReference type="SMART" id="SM00969">
    <property type="entry name" value="SOCS_box"/>
    <property type="match status" value="1"/>
</dbReference>
<dbReference type="SUPFAM" id="SSF55550">
    <property type="entry name" value="SH2 domain"/>
    <property type="match status" value="1"/>
</dbReference>
<dbReference type="SUPFAM" id="SSF158235">
    <property type="entry name" value="SOCS box-like"/>
    <property type="match status" value="1"/>
</dbReference>
<dbReference type="PROSITE" id="PS50001">
    <property type="entry name" value="SH2"/>
    <property type="match status" value="1"/>
</dbReference>
<dbReference type="PROSITE" id="PS50225">
    <property type="entry name" value="SOCS"/>
    <property type="match status" value="1"/>
</dbReference>
<organism>
    <name type="scientific">Homo sapiens</name>
    <name type="common">Human</name>
    <dbReference type="NCBI Taxonomy" id="9606"/>
    <lineage>
        <taxon>Eukaryota</taxon>
        <taxon>Metazoa</taxon>
        <taxon>Chordata</taxon>
        <taxon>Craniata</taxon>
        <taxon>Vertebrata</taxon>
        <taxon>Euteleostomi</taxon>
        <taxon>Mammalia</taxon>
        <taxon>Eutheria</taxon>
        <taxon>Euarchontoglires</taxon>
        <taxon>Primates</taxon>
        <taxon>Haplorrhini</taxon>
        <taxon>Catarrhini</taxon>
        <taxon>Hominidae</taxon>
        <taxon>Homo</taxon>
    </lineage>
</organism>
<protein>
    <recommendedName>
        <fullName>Suppressor of cytokine signaling 1</fullName>
        <shortName>SOCS-1</shortName>
    </recommendedName>
    <alternativeName>
        <fullName>JAK-binding protein</fullName>
        <shortName>JAB</shortName>
    </alternativeName>
    <alternativeName>
        <fullName>STAT-induced STAT inhibitor 1</fullName>
        <shortName>SSI-1</shortName>
    </alternativeName>
    <alternativeName>
        <fullName evidence="15">Tec-interacting protein 3</fullName>
        <shortName evidence="15">TIP-3</shortName>
    </alternativeName>
</protein>
<accession>O15524</accession>
<accession>O15097</accession>
<accession>Q9NSA7</accession>
<comment type="function">
    <text evidence="2 6 7 11 13 14">Essential negative regulator of type I and type II interferon (IFN) signaling, as well as that of other cytokines, including IL2, IL4, IL6 and leukemia inhibitory factor (LIF) (PubMed:32499645, PubMed:33087723). Downregulates cytokine signaling by inhibiting the JAK/STAT signaling pathway. Acts by binding to JAK proteins and to IFNGR1 and inhibiting their kinase activity. In vitro, suppresses Tec protein-tyrosine activity (PubMed:9341160). Regulates IFN-gamma (IFNG)-mediated sensory neuron survival (By similarity). Probable substrate recognition component of an ECS (Elongin BC-CUL2/5-SOCS-box protein) E3 ubiquitin ligase complex which mediates the ubiquitination and subsequent proteasomal degradation of target proteins (PubMed:11278610, PubMed:11313480).</text>
</comment>
<comment type="pathway">
    <text>Protein modification; protein ubiquitination.</text>
</comment>
<comment type="subunit">
    <text evidence="2 8 10">Interacts with multiple activated signaling proteins of the tyrosine kinase signaling pathway including JAK family kinases, TEC, KIT, GRB2 and VAV. Binding to JAKs is mediated through the KIR and SH2 domains to a phosphorylated tyrosine residue within the JAK JH1 domain. Binds the SH3 domain of GRB2 via diproline determinants in the N-terminus, and the N-terminal regulatory domain of VAV (By similarity). Interacts with the Elongin BC complex (ELOB and ELOC). Component of an ECS CBC(SOCS1) E3 ubiquitin-protein ligase complex which contains Elongin BC, CUL5, RBX1 and SOCS1 (By similarity). Interacts (via SH2 domain and SOCS box) with TRIM8 (By similarity). Interacts with AXL, CUL2 and FGFR3. Interacts with INSR (By similarity). Interacts with TRIM8 (PubMed:12163497). Interacts with DCUN1D1 (PubMed:23401859). Interacts with IFNGR1 (By similarity).</text>
</comment>
<comment type="interaction">
    <interactant intactId="EBI-968198">
        <id>O15524</id>
    </interactant>
    <interactant intactId="EBI-1550112">
        <id>Q8N668</id>
        <label>COMMD1</label>
    </interactant>
    <organismsDiffer>false</organismsDiffer>
    <experiments>3</experiments>
</comment>
<comment type="interaction">
    <interactant intactId="EBI-968198">
        <id>O15524</id>
    </interactant>
    <interactant intactId="EBI-301231">
        <id>Q15369</id>
        <label>ELOC</label>
    </interactant>
    <organismsDiffer>false</organismsDiffer>
    <experiments>4</experiments>
</comment>
<comment type="interaction">
    <interactant intactId="EBI-968198">
        <id>O15524</id>
    </interactant>
    <interactant intactId="EBI-641062">
        <id>P04626</id>
        <label>ERBB2</label>
    </interactant>
    <organismsDiffer>false</organismsDiffer>
    <experiments>2</experiments>
</comment>
<comment type="interaction">
    <interactant intactId="EBI-968198">
        <id>O15524</id>
    </interactant>
    <interactant intactId="EBI-73886">
        <id>Q04206</id>
        <label>RELA</label>
    </interactant>
    <organismsDiffer>false</organismsDiffer>
    <experiments>2</experiments>
</comment>
<comment type="interaction">
    <interactant intactId="EBI-968198">
        <id>O15524</id>
    </interactant>
    <interactant intactId="EBI-697911">
        <id>Q99961</id>
        <label>SH3GL1</label>
    </interactant>
    <organismsDiffer>false</organismsDiffer>
    <experiments>3</experiments>
</comment>
<comment type="interaction">
    <interactant intactId="EBI-968198">
        <id>O15524</id>
    </interactant>
    <interactant intactId="EBI-15678227">
        <id>Q77YG1</id>
        <label>gag</label>
    </interactant>
    <organismsDiffer>true</organismsDiffer>
    <experiments>5</experiments>
</comment>
<comment type="subcellular location">
    <subcellularLocation>
        <location evidence="9">Nucleus</location>
    </subcellularLocation>
    <subcellularLocation>
        <location evidence="9">Cytoplasmic vesicle</location>
    </subcellularLocation>
    <text>Detected in perinuclear cytoplasmic vesicles upon interaction with FGFR3.</text>
</comment>
<comment type="tissue specificity">
    <text>Expressed in all tissues with high expression in spleen, small intestine and peripheral blood leukocytes.</text>
</comment>
<comment type="induction">
    <text>By a subset of cytokines including those belonging to the interferon, interleukin and colony-stimulating factor families.</text>
</comment>
<comment type="domain">
    <text>The ESS and SH2 domains are required for JAK phosphotyrosine binding. Further interaction with the KIR domain is necessary for signal and kinase inhibition.</text>
</comment>
<comment type="domain">
    <text evidence="1">The SOCS box domain mediates the interaction with the Elongin BC complex, an adapter module in different E3 ubiquitin ligase complexes. The Elongin BC complex binding domain is also known as BC-box with the consensus [APST]-L-x(3)-C-x(3)-[AILV] and is part of the SOCS box (By similarity).</text>
</comment>
<comment type="disease" evidence="11 12 13">
    <disease id="DI-06141">
        <name>Autoinflammatory syndrome, familial, with or without immunodeficiency</name>
        <acronym>AISIMD</acronym>
        <description>An autosomal dominant, autoinflammatory disorder with incomplete penetrance characterized by autoimmune cytopenia, hemolytic anemia, thrombocytopenia, and lymphadenopathy. Additional variable features may include autoimmune thyroiditis, psoriasis or eczema, nephritis, hepatitis, and symptoms of systemic lupus erythematosus. Immunodeficiency is present in some patients. Disease onset is usually in the first decades of life, although later onset has been reported.</description>
        <dbReference type="MIM" id="619375"/>
    </disease>
    <text>The disease is caused by variants affecting the gene represented in this entry.</text>
</comment>
<comment type="similarity">
    <text evidence="16">Belongs to the SOCS1 family.</text>
</comment>
<comment type="online information" name="Atlas of Genetics and Cytogenetics in Oncology and Haematology">
    <link uri="https://atlasgeneticsoncology.org/gene/42350/SOCS1"/>
</comment>
<feature type="chain" id="PRO_0000181235" description="Suppressor of cytokine signaling 1">
    <location>
        <begin position="1"/>
        <end position="211"/>
    </location>
</feature>
<feature type="domain" description="SH2" evidence="3">
    <location>
        <begin position="79"/>
        <end position="174"/>
    </location>
</feature>
<feature type="domain" description="SOCS box" evidence="4">
    <location>
        <begin position="161"/>
        <end position="210"/>
    </location>
</feature>
<feature type="region of interest" description="Disordered" evidence="5">
    <location>
        <begin position="1"/>
        <end position="53"/>
    </location>
</feature>
<feature type="region of interest" description="Kinase inhibitory region (KIR)">
    <location>
        <begin position="55"/>
        <end position="66"/>
    </location>
</feature>
<feature type="region of interest" description="Extended SH2 subdomain (ESS)">
    <location>
        <begin position="67"/>
        <end position="78"/>
    </location>
</feature>
<feature type="region of interest" description="Interaction with Elongin BC complex" evidence="1">
    <location>
        <begin position="173"/>
        <end position="182"/>
    </location>
</feature>
<feature type="compositionally biased region" description="Low complexity" evidence="5">
    <location>
        <begin position="25"/>
        <end position="35"/>
    </location>
</feature>
<feature type="compositionally biased region" description="Pro residues" evidence="5">
    <location>
        <begin position="36"/>
        <end position="49"/>
    </location>
</feature>
<feature type="sequence variant" id="VAR_085947" description="In AISIMD; loss of inhibition of cytokine-induced STAT phosphorylation, including IFNG-induced STAT1 phosphorylation, IL2-induced STAT5 phosphorylation and IL4-induced STAT6 phosphorylation." evidence="13">
    <original>R</original>
    <variation>W</variation>
    <location>
        <position position="22"/>
    </location>
</feature>
<feature type="sequence variant" id="VAR_085948" description="In AISIMD; heterozygous T-cells show increased levels of STAT1 phosphorylation following treatment with IFNG, compared to control cells." evidence="11">
    <location>
        <begin position="64"/>
        <end position="211"/>
    </location>
</feature>
<feature type="sequence variant" id="VAR_085949" description="In AISIMD; loss of inhibition of cytokine-induced STAT phosphorylation, including IFNG-induced STAT1 phosphorylation, IL2-induced STAT5 phosphorylation and IL4-induced STAT6 phosphorylation." evidence="13">
    <original>P</original>
    <variation>R</variation>
    <location>
        <position position="123"/>
    </location>
</feature>
<feature type="sequence variant" id="VAR_085950" description="In AISIMD; uncertain significance; when transfected into HEK293T cells, shows impaired suppression of IFNG-mediated gene expression compared to wild-type." evidence="13">
    <original>Y</original>
    <variation>H</variation>
    <location>
        <position position="154"/>
    </location>
</feature>
<feature type="sequence variant" id="VAR_061808" description="In dbSNP:rs11549428.">
    <original>Q</original>
    <variation>H</variation>
    <location>
        <position position="210"/>
    </location>
</feature>
<feature type="sequence conflict" description="In Ref. 5; CAB92528." evidence="16" ref="5">
    <original>A</original>
    <variation>G</variation>
    <location>
        <position position="9"/>
    </location>
</feature>
<feature type="sequence conflict" description="In Ref. 6; BAA21537." evidence="16" ref="6">
    <original>TA</original>
    <variation>CP</variation>
    <location>
        <begin position="15"/>
        <end position="16"/>
    </location>
</feature>
<feature type="sequence conflict" description="In Ref. 5; CAB92528." evidence="16" ref="5">
    <original>A</original>
    <variation>G</variation>
    <location>
        <position position="35"/>
    </location>
</feature>
<feature type="sequence conflict" description="In Ref. 5; CAB92528." evidence="16" ref="5">
    <original>C</original>
    <variation>F</variation>
    <location>
        <position position="178"/>
    </location>
</feature>
<proteinExistence type="evidence at protein level"/>